<comment type="function">
    <text evidence="5 6">Flagellar protein involved in sperm flagellum axoneme organization and function.</text>
</comment>
<comment type="subcellular location">
    <subcellularLocation>
        <location evidence="1">Cell projection</location>
        <location evidence="1">Cilium</location>
        <location evidence="1">Flagellum</location>
    </subcellularLocation>
    <subcellularLocation>
        <location evidence="1">Cytoplasm</location>
        <location evidence="1">Cytoskeleton</location>
        <location evidence="1">Flagellum axoneme</location>
    </subcellularLocation>
</comment>
<comment type="tissue specificity">
    <text evidence="5">Expressed in testis.</text>
</comment>
<comment type="disruption phenotype">
    <text evidence="5 6">Mice are viable and show no malformations. However, homozygous males exhibit complete male sterility due to severe defects in sperm mobility. Sperm from mutant mice is characterized by normal flagellum length, but most of them showed abnormal forms and irregular caliber of the midpiece. Females are fertile and give litters of normal size.</text>
</comment>
<comment type="similarity">
    <text evidence="8">Belongs to the CFAP44 family.</text>
</comment>
<reference key="1">
    <citation type="journal article" date="2009" name="PLoS Biol.">
        <title>Lineage-specific biology revealed by a finished genome assembly of the mouse.</title>
        <authorList>
            <person name="Church D.M."/>
            <person name="Goodstadt L."/>
            <person name="Hillier L.W."/>
            <person name="Zody M.C."/>
            <person name="Goldstein S."/>
            <person name="She X."/>
            <person name="Bult C.J."/>
            <person name="Agarwala R."/>
            <person name="Cherry J.L."/>
            <person name="DiCuccio M."/>
            <person name="Hlavina W."/>
            <person name="Kapustin Y."/>
            <person name="Meric P."/>
            <person name="Maglott D."/>
            <person name="Birtle Z."/>
            <person name="Marques A.C."/>
            <person name="Graves T."/>
            <person name="Zhou S."/>
            <person name="Teague B."/>
            <person name="Potamousis K."/>
            <person name="Churas C."/>
            <person name="Place M."/>
            <person name="Herschleb J."/>
            <person name="Runnheim R."/>
            <person name="Forrest D."/>
            <person name="Amos-Landgraf J."/>
            <person name="Schwartz D.C."/>
            <person name="Cheng Z."/>
            <person name="Lindblad-Toh K."/>
            <person name="Eichler E.E."/>
            <person name="Ponting C.P."/>
        </authorList>
    </citation>
    <scope>NUCLEOTIDE SEQUENCE [LARGE SCALE GENOMIC DNA]</scope>
    <source>
        <strain>C57BL/6J</strain>
    </source>
</reference>
<reference key="2">
    <citation type="journal article" date="2017" name="Am. J. Hum. Genet.">
        <title>Biallelic mutations in CFAP43 and CFAP44 cause male infertility with multiple morphological abnormalities of the sperm flagella.</title>
        <authorList>
            <person name="Tang S."/>
            <person name="Wang X."/>
            <person name="Li W."/>
            <person name="Yang X."/>
            <person name="Li Z."/>
            <person name="Liu W."/>
            <person name="Li C."/>
            <person name="Zhu Z."/>
            <person name="Wang L."/>
            <person name="Wang J."/>
            <person name="Zhang L."/>
            <person name="Sun X."/>
            <person name="Zhi E."/>
            <person name="Wang H."/>
            <person name="Li H."/>
            <person name="Jin L."/>
            <person name="Luo Y."/>
            <person name="Wang J."/>
            <person name="Yang S."/>
            <person name="Zhang F."/>
        </authorList>
    </citation>
    <scope>DISRUPTION PHENOTYPE</scope>
    <scope>FUNCTION</scope>
</reference>
<reference key="3">
    <citation type="journal article" date="2018" name="Nat. Commun.">
        <title>Mutations in CFAP43 and CFAP44 cause male infertility and flagellum defects in Trypanosoma and human.</title>
        <authorList>
            <person name="Coutton C."/>
            <person name="Vargas A.S."/>
            <person name="Amiri-Yekta A."/>
            <person name="Kherraf Z.E."/>
            <person name="Ben Mustapha S.F."/>
            <person name="Le Tanno P."/>
            <person name="Wambergue-Legrand C."/>
            <person name="Karaouzene T."/>
            <person name="Martinez G."/>
            <person name="Crouzy S."/>
            <person name="Daneshipour A."/>
            <person name="Hosseini S.H."/>
            <person name="Mitchell V."/>
            <person name="Halouani L."/>
            <person name="Marrakchi O."/>
            <person name="Makni M."/>
            <person name="Latrous H."/>
            <person name="Kharouf M."/>
            <person name="Deleuze J.F."/>
            <person name="Boland A."/>
            <person name="Hennebicq S."/>
            <person name="Satre V."/>
            <person name="Jouk P.S."/>
            <person name="Thierry-Mieg N."/>
            <person name="Conne B."/>
            <person name="Dacheux D."/>
            <person name="Landrein N."/>
            <person name="Schmitt A."/>
            <person name="Stouvenel L."/>
            <person name="Lores P."/>
            <person name="El Khouri E."/>
            <person name="Bottari S.P."/>
            <person name="Faure J."/>
            <person name="Wolf J.P."/>
            <person name="Pernet-Gallay K."/>
            <person name="Escoffier J."/>
            <person name="Gourabi H."/>
            <person name="Robinson D.R."/>
            <person name="Nef S."/>
            <person name="Dulioust E."/>
            <person name="Zouari R."/>
            <person name="Bonhivers M."/>
            <person name="Toure A."/>
            <person name="Arnoult C."/>
            <person name="Ray P.F."/>
        </authorList>
    </citation>
    <scope>DISRUPTION PHENOTYPE</scope>
    <scope>FUNCTION</scope>
</reference>
<sequence length="1843" mass="211546">MKEPDDQDTSDGGRSGSRNEGKLAHKSILKSSQDTTADSYTDGEESYLGDDLDLDDMDESSHSSQEYVQAPAPSQEPPVEVKEEPEADVKKVLSETFYYDYPELVSIPYVSSEERIPLYFLTLNHSFGYDCRKRANLQLLDSNTLLYVAGNQMVLLDFKDKTQIYLQSSSGQGIGAIGVHPKKTYFAVAEKGSFPKIIIYEYPSLKPYRILRDGAEKAYAYVDFNNEGNLLASVGCHPDYTITIWGWKEEQPILRTKAFSQDVFKVTFNPDNDEQLTTSGSGHIKFWEMAFTFTGLKLQGSLGRFGKTSTSDIEGYAELPDGKVLSGSEWGNLLLWEGSLIKVELCRTGMKSCHSGSINQIMLDEGEVITAGSDGSVRIWDFETIDTADVIDDTGLLEIEPINELHIDKSVNLFSMIKMNEVGNNFWLAQDANGAIWKLDLSFSNITQDPECLFSFHSGPIAALAVSPLTYLMATTAMDCSVRVYDFSSKNPLVHMKFKQGGTSLIWAPRSVSVSASQIVVGFQDGVVRVLELFDPKGLTVYAGRKKIPDAELHLKYVFKPHTDEVTALAYERDGDILATGSEDKTVFFFDVEKEYKPIGFFNTPGPICQLMWSPASHPEKTLLIICENGYILESLCPTIKDVDDQNVITFAIPNVFLRCFHFTSVKSKILRFLEVQRREQQKMLKEKEKLERRMKLAEEREAFGEEEIPEEETSEEGEEEEPPLPEIFMPPTPSPILCGFYSEPGKFWVSLGNYDAGFLYHCQFPSYLHNSDFQKQENEPFDFRVLENTEDNPIRNITFSNDQTMMFCGMTNGAIRVYVLSENDPFLVSLQHYWHFNVHDNNYGSIKSITSSFDDQYLLTAGEDGNIFVFDIFSEFIVPKGIKAKVPSPRFGIESEAAPEDIEDPKAYSIENARKKREHDKLMKKVEELKAHKREQIKILRNEFWKLLELNKELPAHMQFQRTDFNIDAKIHAEIHKKTSLKIEQVEKELAWEKQKHELGLKKLQDRFREPLESDTIVVYATQSDHQIASYRLVKPSKYSKLKRPSQSERRQSKMERLEKEGPGKKESQRDTGGSISLQEESVLEKGKKFRPRTLSEIMVENQIEKTKKLIQQAERAQFKILQRKKEWEELYKSKPDDDYEDPKDVQAIKEAQTYMGDFNLKTAPDYKIPEHMRINAAKKEEELGYLDTMAHGKKRYMNKCILSLRDLKLAVIEEIQCLVQELKNIQSSIPASKHMPIPQVPQIYPEEVPERRFQYDEETLLRFQRKQKKRQDKSSSKQSGTGSGGSAGGGLVGFLKLSSGKEGDLTTRDSLSRSSKASALLELPKPVEFEKAEPSDAELEIMKRDEVKHLYMQQFLCNRINELTVTFDAELHLLRHQKLKLDTKMKLSDLHHLTLFQEMLLLKNFEKQENILQERVNSLDKEEQDMQWKINETLKEMEEKKNEITKLQDQEKALYAGFQAALGENNKFANFLMKVLKKKIKRAKKKEVEGDADEDEESEESSEEESSLESDEDASGSEDDVFDDSICPTNCDVSLFELALQLREKRLDIEEALVEEKKIVDNLKKEYDTISKKVKVVATNLNAAEEALEAYQREKQQRLNELLVVIPLKLHQIEYMEFGEVPEDLSGTLVFSNHSLDRLQERIVQLQEENAKQQKLNKECRERRKLLIREKREMAKTISKMEETVRELMISKFGRVIDLEALQTLSVNTTLEELKIKKLRKELSNAKELRMWEEKIAQVRWDLMMKTKEHTKKLHQMNDLCLEKKKLDSRLNTLQNQQGNAFQGLRKADIVAKQKVTELVQTQLEKITALKEEIELLRKKGGLLLPPITPKPKNEMKPMDT</sequence>
<dbReference type="EMBL" id="AC147045">
    <property type="status" value="NOT_ANNOTATED_CDS"/>
    <property type="molecule type" value="Genomic_DNA"/>
</dbReference>
<dbReference type="CCDS" id="CCDS49854.1"/>
<dbReference type="RefSeq" id="NP_001028419.1">
    <property type="nucleotide sequence ID" value="NM_001033247.1"/>
</dbReference>
<dbReference type="RefSeq" id="XP_011244166.1">
    <property type="nucleotide sequence ID" value="XM_011245864.4"/>
</dbReference>
<dbReference type="SMR" id="E9Q5M6"/>
<dbReference type="FunCoup" id="E9Q5M6">
    <property type="interactions" value="10"/>
</dbReference>
<dbReference type="STRING" id="10090.ENSMUSP00000097331"/>
<dbReference type="iPTMnet" id="E9Q5M6"/>
<dbReference type="PhosphoSitePlus" id="E9Q5M6"/>
<dbReference type="PaxDb" id="10090-ENSMUSP00000097331"/>
<dbReference type="ProteomicsDB" id="340544"/>
<dbReference type="Antibodypedia" id="68151">
    <property type="antibodies" value="63 antibodies from 15 providers"/>
</dbReference>
<dbReference type="Ensembl" id="ENSMUST00000099742.9">
    <property type="protein sequence ID" value="ENSMUSP00000097331.3"/>
    <property type="gene ID" value="ENSMUSG00000071550.15"/>
</dbReference>
<dbReference type="Ensembl" id="ENSMUST00000120049.8">
    <property type="protein sequence ID" value="ENSMUSP00000113908.2"/>
    <property type="gene ID" value="ENSMUSG00000071550.15"/>
</dbReference>
<dbReference type="GeneID" id="212517"/>
<dbReference type="KEGG" id="mmu:212517"/>
<dbReference type="UCSC" id="uc012agb.1">
    <property type="organism name" value="mouse"/>
</dbReference>
<dbReference type="AGR" id="MGI:1277238"/>
<dbReference type="CTD" id="55779"/>
<dbReference type="MGI" id="MGI:1277238">
    <property type="gene designation" value="Cfap44"/>
</dbReference>
<dbReference type="VEuPathDB" id="HostDB:ENSMUSG00000071550"/>
<dbReference type="eggNOG" id="KOG2106">
    <property type="taxonomic scope" value="Eukaryota"/>
</dbReference>
<dbReference type="GeneTree" id="ENSGT00940000161555"/>
<dbReference type="HOGENOM" id="CLU_000928_0_0_1"/>
<dbReference type="InParanoid" id="E9Q5M6"/>
<dbReference type="OMA" id="FIMDRVH"/>
<dbReference type="OrthoDB" id="1935234at2759"/>
<dbReference type="PhylomeDB" id="E9Q5M6"/>
<dbReference type="TreeFam" id="TF323192"/>
<dbReference type="BioGRID-ORCS" id="212517">
    <property type="hits" value="1 hit in 77 CRISPR screens"/>
</dbReference>
<dbReference type="ChiTaRS" id="Cfap44">
    <property type="organism name" value="mouse"/>
</dbReference>
<dbReference type="PRO" id="PR:E9Q5M6"/>
<dbReference type="Proteomes" id="UP000000589">
    <property type="component" value="Chromosome 16"/>
</dbReference>
<dbReference type="RNAct" id="E9Q5M6">
    <property type="molecule type" value="protein"/>
</dbReference>
<dbReference type="Bgee" id="ENSMUSG00000071550">
    <property type="expression patterns" value="Expressed in vasculature of organ and 42 other cell types or tissues"/>
</dbReference>
<dbReference type="ExpressionAtlas" id="E9Q5M6">
    <property type="expression patterns" value="baseline and differential"/>
</dbReference>
<dbReference type="GO" id="GO:0005930">
    <property type="term" value="C:axoneme"/>
    <property type="evidence" value="ECO:0000250"/>
    <property type="project" value="UniProtKB"/>
</dbReference>
<dbReference type="GO" id="GO:0031514">
    <property type="term" value="C:motile cilium"/>
    <property type="evidence" value="ECO:0007669"/>
    <property type="project" value="UniProtKB-SubCell"/>
</dbReference>
<dbReference type="GO" id="GO:0008233">
    <property type="term" value="F:peptidase activity"/>
    <property type="evidence" value="ECO:0000266"/>
    <property type="project" value="MGI"/>
</dbReference>
<dbReference type="GO" id="GO:0000902">
    <property type="term" value="P:cell morphogenesis"/>
    <property type="evidence" value="ECO:0000315"/>
    <property type="project" value="MGI"/>
</dbReference>
<dbReference type="GO" id="GO:0044782">
    <property type="term" value="P:cilium organization"/>
    <property type="evidence" value="ECO:0000315"/>
    <property type="project" value="MGI"/>
</dbReference>
<dbReference type="GO" id="GO:0030317">
    <property type="term" value="P:flagellated sperm motility"/>
    <property type="evidence" value="ECO:0000315"/>
    <property type="project" value="UniProtKB"/>
</dbReference>
<dbReference type="GO" id="GO:0000226">
    <property type="term" value="P:microtubule cytoskeleton organization"/>
    <property type="evidence" value="ECO:0000266"/>
    <property type="project" value="MGI"/>
</dbReference>
<dbReference type="GO" id="GO:0006997">
    <property type="term" value="P:nucleus organization"/>
    <property type="evidence" value="ECO:0000316"/>
    <property type="project" value="MGI"/>
</dbReference>
<dbReference type="GO" id="GO:0007288">
    <property type="term" value="P:sperm axoneme assembly"/>
    <property type="evidence" value="ECO:0000315"/>
    <property type="project" value="UniProtKB"/>
</dbReference>
<dbReference type="GO" id="GO:0007283">
    <property type="term" value="P:spermatogenesis"/>
    <property type="evidence" value="ECO:0000315"/>
    <property type="project" value="MGI"/>
</dbReference>
<dbReference type="FunFam" id="2.130.10.10:FF:003169">
    <property type="entry name" value="Cilia and flagella-associated protein 44"/>
    <property type="match status" value="1"/>
</dbReference>
<dbReference type="FunFam" id="2.130.10.10:FF:000401">
    <property type="entry name" value="Cilia- and flagella-associated protein 44"/>
    <property type="match status" value="1"/>
</dbReference>
<dbReference type="FunFam" id="2.130.10.10:FF:000547">
    <property type="entry name" value="Cilia- and flagella-associated protein 44"/>
    <property type="match status" value="1"/>
</dbReference>
<dbReference type="Gene3D" id="2.130.10.10">
    <property type="entry name" value="YVTN repeat-like/Quinoprotein amine dehydrogenase"/>
    <property type="match status" value="3"/>
</dbReference>
<dbReference type="InterPro" id="IPR055439">
    <property type="entry name" value="Beta-prop_EML_1st"/>
</dbReference>
<dbReference type="InterPro" id="IPR015943">
    <property type="entry name" value="WD40/YVTN_repeat-like_dom_sf"/>
</dbReference>
<dbReference type="InterPro" id="IPR019775">
    <property type="entry name" value="WD40_repeat_CS"/>
</dbReference>
<dbReference type="InterPro" id="IPR036322">
    <property type="entry name" value="WD40_repeat_dom_sf"/>
</dbReference>
<dbReference type="InterPro" id="IPR001680">
    <property type="entry name" value="WD40_rpt"/>
</dbReference>
<dbReference type="PANTHER" id="PTHR14885">
    <property type="entry name" value="CILIA- AND FLAGELLA-ASSOCIATED PROTEIN 43-RELATED"/>
    <property type="match status" value="1"/>
</dbReference>
<dbReference type="PANTHER" id="PTHR14885:SF3">
    <property type="entry name" value="CILIA- AND FLAGELLA-ASSOCIATED PROTEIN 44"/>
    <property type="match status" value="1"/>
</dbReference>
<dbReference type="Pfam" id="PF23409">
    <property type="entry name" value="Beta-prop_EML"/>
    <property type="match status" value="1"/>
</dbReference>
<dbReference type="Pfam" id="PF00400">
    <property type="entry name" value="WD40"/>
    <property type="match status" value="3"/>
</dbReference>
<dbReference type="SMART" id="SM00320">
    <property type="entry name" value="WD40"/>
    <property type="match status" value="8"/>
</dbReference>
<dbReference type="SUPFAM" id="SSF50978">
    <property type="entry name" value="WD40 repeat-like"/>
    <property type="match status" value="2"/>
</dbReference>
<dbReference type="PROSITE" id="PS00678">
    <property type="entry name" value="WD_REPEATS_1"/>
    <property type="match status" value="1"/>
</dbReference>
<dbReference type="PROSITE" id="PS50082">
    <property type="entry name" value="WD_REPEATS_2"/>
    <property type="match status" value="3"/>
</dbReference>
<dbReference type="PROSITE" id="PS50294">
    <property type="entry name" value="WD_REPEATS_REGION"/>
    <property type="match status" value="1"/>
</dbReference>
<gene>
    <name evidence="7 9" type="primary">Cfap44</name>
</gene>
<protein>
    <recommendedName>
        <fullName evidence="7">Cilia- and flagella-associated protein 44</fullName>
    </recommendedName>
</protein>
<feature type="chain" id="PRO_0000445514" description="Cilia- and flagella-associated protein 44">
    <location>
        <begin position="1"/>
        <end position="1843"/>
    </location>
</feature>
<feature type="repeat" description="WD 1" evidence="3">
    <location>
        <begin position="214"/>
        <end position="255"/>
    </location>
</feature>
<feature type="repeat" description="WD 2" evidence="3">
    <location>
        <begin position="258"/>
        <end position="297"/>
    </location>
</feature>
<feature type="repeat" description="WD 3" evidence="3">
    <location>
        <begin position="308"/>
        <end position="346"/>
    </location>
</feature>
<feature type="repeat" description="WD 4" evidence="3">
    <location>
        <begin position="353"/>
        <end position="390"/>
    </location>
</feature>
<feature type="repeat" description="WD 5" evidence="3">
    <location>
        <begin position="456"/>
        <end position="495"/>
    </location>
</feature>
<feature type="repeat" description="WD 6" evidence="3">
    <location>
        <begin position="497"/>
        <end position="541"/>
    </location>
</feature>
<feature type="repeat" description="WD 7" evidence="3">
    <location>
        <begin position="561"/>
        <end position="600"/>
    </location>
</feature>
<feature type="repeat" description="WD 8" evidence="3">
    <location>
        <begin position="790"/>
        <end position="829"/>
    </location>
</feature>
<feature type="repeat" description="WD 9" evidence="3">
    <location>
        <begin position="842"/>
        <end position="881"/>
    </location>
</feature>
<feature type="repeat" description="WD 10" evidence="3">
    <location>
        <begin position="1699"/>
        <end position="1744"/>
    </location>
</feature>
<feature type="region of interest" description="Disordered" evidence="4">
    <location>
        <begin position="1"/>
        <end position="86"/>
    </location>
</feature>
<feature type="region of interest" description="Disordered" evidence="4">
    <location>
        <begin position="701"/>
        <end position="726"/>
    </location>
</feature>
<feature type="region of interest" description="Disordered" evidence="4">
    <location>
        <begin position="1040"/>
        <end position="1086"/>
    </location>
</feature>
<feature type="region of interest" description="Disordered" evidence="4">
    <location>
        <begin position="1266"/>
        <end position="1291"/>
    </location>
</feature>
<feature type="region of interest" description="Disordered" evidence="4">
    <location>
        <begin position="1488"/>
        <end position="1524"/>
    </location>
</feature>
<feature type="coiled-coil region" evidence="3">
    <location>
        <begin position="1548"/>
        <end position="1603"/>
    </location>
</feature>
<feature type="coiled-coil region" evidence="3">
    <location>
        <begin position="1631"/>
        <end position="1665"/>
    </location>
</feature>
<feature type="compositionally biased region" description="Polar residues" evidence="4">
    <location>
        <begin position="29"/>
        <end position="39"/>
    </location>
</feature>
<feature type="compositionally biased region" description="Acidic residues" evidence="4">
    <location>
        <begin position="41"/>
        <end position="58"/>
    </location>
</feature>
<feature type="compositionally biased region" description="Acidic residues" evidence="4">
    <location>
        <begin position="705"/>
        <end position="724"/>
    </location>
</feature>
<feature type="compositionally biased region" description="Basic and acidic residues" evidence="4">
    <location>
        <begin position="1047"/>
        <end position="1071"/>
    </location>
</feature>
<feature type="compositionally biased region" description="Polar residues" evidence="4">
    <location>
        <begin position="1072"/>
        <end position="1081"/>
    </location>
</feature>
<feature type="compositionally biased region" description="Acidic residues" evidence="4">
    <location>
        <begin position="1492"/>
        <end position="1524"/>
    </location>
</feature>
<feature type="modified residue" description="Phosphoserine" evidence="2">
    <location>
        <position position="1069"/>
    </location>
</feature>
<accession>E9Q5M6</accession>
<proteinExistence type="evidence at transcript level"/>
<keyword id="KW-0966">Cell projection</keyword>
<keyword id="KW-0969">Cilium</keyword>
<keyword id="KW-0175">Coiled coil</keyword>
<keyword id="KW-0963">Cytoplasm</keyword>
<keyword id="KW-0206">Cytoskeleton</keyword>
<keyword id="KW-0282">Flagellum</keyword>
<keyword id="KW-0597">Phosphoprotein</keyword>
<keyword id="KW-1185">Reference proteome</keyword>
<keyword id="KW-0677">Repeat</keyword>
<keyword id="KW-0853">WD repeat</keyword>
<name>CFA44_MOUSE</name>
<organism>
    <name type="scientific">Mus musculus</name>
    <name type="common">Mouse</name>
    <dbReference type="NCBI Taxonomy" id="10090"/>
    <lineage>
        <taxon>Eukaryota</taxon>
        <taxon>Metazoa</taxon>
        <taxon>Chordata</taxon>
        <taxon>Craniata</taxon>
        <taxon>Vertebrata</taxon>
        <taxon>Euteleostomi</taxon>
        <taxon>Mammalia</taxon>
        <taxon>Eutheria</taxon>
        <taxon>Euarchontoglires</taxon>
        <taxon>Glires</taxon>
        <taxon>Rodentia</taxon>
        <taxon>Myomorpha</taxon>
        <taxon>Muroidea</taxon>
        <taxon>Muridae</taxon>
        <taxon>Murinae</taxon>
        <taxon>Mus</taxon>
        <taxon>Mus</taxon>
    </lineage>
</organism>
<evidence type="ECO:0000250" key="1">
    <source>
        <dbReference type="UniProtKB" id="Q57WH1"/>
    </source>
</evidence>
<evidence type="ECO:0000250" key="2">
    <source>
        <dbReference type="UniProtKB" id="Q96MT7"/>
    </source>
</evidence>
<evidence type="ECO:0000255" key="3"/>
<evidence type="ECO:0000256" key="4">
    <source>
        <dbReference type="SAM" id="MobiDB-lite"/>
    </source>
</evidence>
<evidence type="ECO:0000269" key="5">
    <source>
    </source>
</evidence>
<evidence type="ECO:0000269" key="6">
    <source>
    </source>
</evidence>
<evidence type="ECO:0000303" key="7">
    <source>
    </source>
</evidence>
<evidence type="ECO:0000305" key="8"/>
<evidence type="ECO:0000312" key="9">
    <source>
        <dbReference type="MGI" id="MGI:1277238"/>
    </source>
</evidence>